<organism>
    <name type="scientific">Xenopus tropicalis</name>
    <name type="common">Western clawed frog</name>
    <name type="synonym">Silurana tropicalis</name>
    <dbReference type="NCBI Taxonomy" id="8364"/>
    <lineage>
        <taxon>Eukaryota</taxon>
        <taxon>Metazoa</taxon>
        <taxon>Chordata</taxon>
        <taxon>Craniata</taxon>
        <taxon>Vertebrata</taxon>
        <taxon>Euteleostomi</taxon>
        <taxon>Amphibia</taxon>
        <taxon>Batrachia</taxon>
        <taxon>Anura</taxon>
        <taxon>Pipoidea</taxon>
        <taxon>Pipidae</taxon>
        <taxon>Xenopodinae</taxon>
        <taxon>Xenopus</taxon>
        <taxon>Silurana</taxon>
    </lineage>
</organism>
<dbReference type="EMBL" id="BC074572">
    <property type="protein sequence ID" value="AAH74572.1"/>
    <property type="molecule type" value="mRNA"/>
</dbReference>
<dbReference type="RefSeq" id="NP_001002902.1">
    <property type="nucleotide sequence ID" value="NM_001002902.1"/>
</dbReference>
<dbReference type="RefSeq" id="XP_012812148.1">
    <property type="nucleotide sequence ID" value="XM_012956694.3"/>
</dbReference>
<dbReference type="RefSeq" id="XP_017946645.1">
    <property type="nucleotide sequence ID" value="XM_018091156.1"/>
</dbReference>
<dbReference type="SMR" id="Q6GLC7"/>
<dbReference type="FunCoup" id="Q6GLC7">
    <property type="interactions" value="1293"/>
</dbReference>
<dbReference type="STRING" id="8364.ENSXETP00000054541"/>
<dbReference type="DNASU" id="444885"/>
<dbReference type="GeneID" id="444885"/>
<dbReference type="KEGG" id="xtr:444885"/>
<dbReference type="AGR" id="Xenbase:XB-GENE-946929"/>
<dbReference type="CTD" id="55143"/>
<dbReference type="Xenbase" id="XB-GENE-946929">
    <property type="gene designation" value="cdca8"/>
</dbReference>
<dbReference type="InParanoid" id="Q6GLC7"/>
<dbReference type="OMA" id="PMVREAK"/>
<dbReference type="OrthoDB" id="6360905at2759"/>
<dbReference type="Reactome" id="R-XTR-141444">
    <property type="pathway name" value="Amplification of signal from unattached kinetochores via a MAD2 inhibitory signal"/>
</dbReference>
<dbReference type="Reactome" id="R-XTR-2467813">
    <property type="pathway name" value="Separation of Sister Chromatids"/>
</dbReference>
<dbReference type="Reactome" id="R-XTR-2500257">
    <property type="pathway name" value="Resolution of Sister Chromatid Cohesion"/>
</dbReference>
<dbReference type="Reactome" id="R-XTR-4615885">
    <property type="pathway name" value="SUMOylation of DNA replication proteins"/>
</dbReference>
<dbReference type="Reactome" id="R-XTR-5663220">
    <property type="pathway name" value="RHO GTPases Activate Formins"/>
</dbReference>
<dbReference type="Reactome" id="R-XTR-68877">
    <property type="pathway name" value="Mitotic Prometaphase"/>
</dbReference>
<dbReference type="Reactome" id="R-XTR-9648025">
    <property type="pathway name" value="EML4 and NUDC in mitotic spindle formation"/>
</dbReference>
<dbReference type="Proteomes" id="UP000008143">
    <property type="component" value="Chromosome 2"/>
</dbReference>
<dbReference type="Bgee" id="ENSXETG00000002167">
    <property type="expression patterns" value="Expressed in egg cell and 10 other cell types or tissues"/>
</dbReference>
<dbReference type="ExpressionAtlas" id="Q6GLC7">
    <property type="expression patterns" value="baseline"/>
</dbReference>
<dbReference type="GO" id="GO:0000775">
    <property type="term" value="C:chromosome, centromeric region"/>
    <property type="evidence" value="ECO:0007669"/>
    <property type="project" value="UniProtKB-SubCell"/>
</dbReference>
<dbReference type="GO" id="GO:0005737">
    <property type="term" value="C:cytoplasm"/>
    <property type="evidence" value="ECO:0007669"/>
    <property type="project" value="UniProtKB-KW"/>
</dbReference>
<dbReference type="GO" id="GO:0005634">
    <property type="term" value="C:nucleus"/>
    <property type="evidence" value="ECO:0007669"/>
    <property type="project" value="UniProtKB-SubCell"/>
</dbReference>
<dbReference type="GO" id="GO:0005819">
    <property type="term" value="C:spindle"/>
    <property type="evidence" value="ECO:0007669"/>
    <property type="project" value="UniProtKB-SubCell"/>
</dbReference>
<dbReference type="GO" id="GO:0051301">
    <property type="term" value="P:cell division"/>
    <property type="evidence" value="ECO:0007669"/>
    <property type="project" value="UniProtKB-KW"/>
</dbReference>
<dbReference type="GO" id="GO:0007059">
    <property type="term" value="P:chromosome segregation"/>
    <property type="evidence" value="ECO:0007669"/>
    <property type="project" value="UniProtKB-KW"/>
</dbReference>
<dbReference type="Gene3D" id="6.10.140.560">
    <property type="match status" value="1"/>
</dbReference>
<dbReference type="Gene3D" id="6.10.250.1900">
    <property type="match status" value="1"/>
</dbReference>
<dbReference type="InterPro" id="IPR046466">
    <property type="entry name" value="Borealin_C"/>
</dbReference>
<dbReference type="InterPro" id="IPR018851">
    <property type="entry name" value="Borealin_N"/>
</dbReference>
<dbReference type="InterPro" id="IPR018867">
    <property type="entry name" value="Cell_div_borealin"/>
</dbReference>
<dbReference type="PANTHER" id="PTHR16040">
    <property type="entry name" value="AUSTRALIN, ISOFORM A-RELATED"/>
    <property type="match status" value="1"/>
</dbReference>
<dbReference type="PANTHER" id="PTHR16040:SF6">
    <property type="entry name" value="BOREALIN"/>
    <property type="match status" value="1"/>
</dbReference>
<dbReference type="Pfam" id="PF10512">
    <property type="entry name" value="Borealin"/>
    <property type="match status" value="1"/>
</dbReference>
<dbReference type="Pfam" id="PF10444">
    <property type="entry name" value="Nbl1_Borealin_N"/>
    <property type="match status" value="1"/>
</dbReference>
<feature type="chain" id="PRO_0000247082" description="Borealin">
    <location>
        <begin position="1"/>
        <end position="279"/>
    </location>
</feature>
<feature type="region of interest" description="Disordered" evidence="2">
    <location>
        <begin position="135"/>
        <end position="180"/>
    </location>
</feature>
<feature type="compositionally biased region" description="Basic residues" evidence="2">
    <location>
        <begin position="135"/>
        <end position="152"/>
    </location>
</feature>
<feature type="compositionally biased region" description="Polar residues" evidence="2">
    <location>
        <begin position="153"/>
        <end position="163"/>
    </location>
</feature>
<keyword id="KW-0131">Cell cycle</keyword>
<keyword id="KW-0132">Cell division</keyword>
<keyword id="KW-0137">Centromere</keyword>
<keyword id="KW-0158">Chromosome</keyword>
<keyword id="KW-0159">Chromosome partition</keyword>
<keyword id="KW-0963">Cytoplasm</keyword>
<keyword id="KW-0206">Cytoskeleton</keyword>
<keyword id="KW-0498">Mitosis</keyword>
<keyword id="KW-0539">Nucleus</keyword>
<keyword id="KW-1185">Reference proteome</keyword>
<accession>Q6GLC7</accession>
<gene>
    <name type="primary">cdca8</name>
</gene>
<proteinExistence type="evidence at transcript level"/>
<evidence type="ECO:0000250" key="1"/>
<evidence type="ECO:0000256" key="2">
    <source>
        <dbReference type="SAM" id="MobiDB-lite"/>
    </source>
</evidence>
<evidence type="ECO:0000305" key="3"/>
<protein>
    <recommendedName>
        <fullName>Borealin</fullName>
    </recommendedName>
    <alternativeName>
        <fullName>Cell division cycle-associated protein 8</fullName>
    </alternativeName>
    <alternativeName>
        <fullName>Dasra-B</fullName>
    </alternativeName>
</protein>
<name>BORE1_XENTR</name>
<reference key="1">
    <citation type="submission" date="2004-06" db="EMBL/GenBank/DDBJ databases">
        <authorList>
            <consortium name="NIH - Xenopus Gene Collection (XGC) project"/>
        </authorList>
    </citation>
    <scope>NUCLEOTIDE SEQUENCE [LARGE SCALE MRNA]</scope>
    <source>
        <tissue>Embryo</tissue>
    </source>
</reference>
<comment type="function">
    <text evidence="1">Component of the chromosomal passenger complex (CPC), a complex that acts as a key regulator of mitosis. The CPC complex has essential functions at the centromere in ensuring correct chromosome alignment and segregation and is required for chromatin-induced microtubule stabilization and spindle assembly. Contributes to CPC function by facilitating loading of the CPC onto chromosomes (By similarity).</text>
</comment>
<comment type="subunit">
    <text evidence="1">Component of the CPC at least composed of survivin/birc5, incenp, cdca8/borealin and/or cdca9/dasra-A, and aurkb/aurora-B. Interacts with incenp (via N-terminus) (By similarity).</text>
</comment>
<comment type="subcellular location">
    <subcellularLocation>
        <location evidence="1">Nucleus</location>
    </subcellularLocation>
    <subcellularLocation>
        <location evidence="1">Chromosome</location>
        <location evidence="1">Centromere</location>
    </subcellularLocation>
    <subcellularLocation>
        <location evidence="1">Cytoplasm</location>
        <location evidence="1">Cytoskeleton</location>
        <location evidence="1">Spindle</location>
    </subcellularLocation>
    <text evidence="1">Localizes on chromosome arms and inner centromeres from prophase through metaphase and then transferring to the spindle midzone and midbody from anaphase through cytokinesis.</text>
</comment>
<comment type="similarity">
    <text evidence="3">Belongs to the borealin family.</text>
</comment>
<sequence length="279" mass="30880">MAPTKKKTSRKPKNRCVKNEKLASFIKDFDSQVKIITEELKASVVNILKEVDSQYNIEIIKLPMAIREMCWLDYIAKGGSQKALEAAATVKVDMEEITSTVTKTPFKLDKKVKKGKCKSDETLEPNPLQSVIRTKTKAKVAAKKPSTARKTRASTANLTNTSKRTSKRGRATPSASKQIETSLLGYTPAATPRIDTSIFKTPALRTPCLQEPVYTFSANGSPLAGMDELFINVPAGDGKNIRLLASEVDSLDINRLDNQAFENIKLLSSQLQRFCKKLK</sequence>